<proteinExistence type="inferred from homology"/>
<accession>Q0I5E2</accession>
<name>DCUP_HISS1</name>
<protein>
    <recommendedName>
        <fullName evidence="1">Uroporphyrinogen decarboxylase</fullName>
        <shortName evidence="1">UPD</shortName>
        <shortName evidence="1">URO-D</shortName>
        <ecNumber evidence="1">4.1.1.37</ecNumber>
    </recommendedName>
</protein>
<sequence length="354" mass="39244">MTVLKNERYLKALLREPVDMTPVWMMRQAGRYLPEYKATRAKAGDFMSLCRNADLACEVTLQPLRRYDLDAAILFSDILTIPDAMGLGLSFGVGEGPKFARPVENKSAVQNLPIPDPEQELQYVMNAVRTIRRELKGEVPLIGFSGSPWTLATYMVEGGSSKAFTKIKKMMYSEPKILHLLLDKLADAVILYLNAQINAGVQAVMVFDTWGGVLGHREYLDFSLQYMHKIVDGLIRENDGYKVPVTLFTKGGGLWLEAMASTGCDALGLDWTVNLAEAKARVGHKVALQGNMDPSVLYASPARIEQEVQQILADFGQGSGHVFNLGHGIHQDVPEISPKVFVDAVHQYSVSYHQ</sequence>
<evidence type="ECO:0000255" key="1">
    <source>
        <dbReference type="HAMAP-Rule" id="MF_00218"/>
    </source>
</evidence>
<comment type="function">
    <text evidence="1">Catalyzes the decarboxylation of four acetate groups of uroporphyrinogen-III to yield coproporphyrinogen-III.</text>
</comment>
<comment type="catalytic activity">
    <reaction evidence="1">
        <text>uroporphyrinogen III + 4 H(+) = coproporphyrinogen III + 4 CO2</text>
        <dbReference type="Rhea" id="RHEA:19865"/>
        <dbReference type="ChEBI" id="CHEBI:15378"/>
        <dbReference type="ChEBI" id="CHEBI:16526"/>
        <dbReference type="ChEBI" id="CHEBI:57308"/>
        <dbReference type="ChEBI" id="CHEBI:57309"/>
        <dbReference type="EC" id="4.1.1.37"/>
    </reaction>
</comment>
<comment type="pathway">
    <text evidence="1">Porphyrin-containing compound metabolism; protoporphyrin-IX biosynthesis; coproporphyrinogen-III from 5-aminolevulinate: step 4/4.</text>
</comment>
<comment type="subunit">
    <text evidence="1">Homodimer.</text>
</comment>
<comment type="subcellular location">
    <subcellularLocation>
        <location evidence="1">Cytoplasm</location>
    </subcellularLocation>
</comment>
<comment type="similarity">
    <text evidence="1">Belongs to the uroporphyrinogen decarboxylase family.</text>
</comment>
<reference key="1">
    <citation type="journal article" date="2007" name="J. Bacteriol.">
        <title>Complete genome sequence of Haemophilus somnus (Histophilus somni) strain 129Pt and comparison to Haemophilus ducreyi 35000HP and Haemophilus influenzae Rd.</title>
        <authorList>
            <person name="Challacombe J.F."/>
            <person name="Duncan A.J."/>
            <person name="Brettin T.S."/>
            <person name="Bruce D."/>
            <person name="Chertkov O."/>
            <person name="Detter J.C."/>
            <person name="Han C.S."/>
            <person name="Misra M."/>
            <person name="Richardson P."/>
            <person name="Tapia R."/>
            <person name="Thayer N."/>
            <person name="Xie G."/>
            <person name="Inzana T.J."/>
        </authorList>
    </citation>
    <scope>NUCLEOTIDE SEQUENCE [LARGE SCALE GENOMIC DNA]</scope>
    <source>
        <strain>129Pt</strain>
    </source>
</reference>
<gene>
    <name evidence="1" type="primary">hemE</name>
    <name type="ordered locus">HS_1540</name>
</gene>
<organism>
    <name type="scientific">Histophilus somni (strain 129Pt)</name>
    <name type="common">Haemophilus somnus</name>
    <dbReference type="NCBI Taxonomy" id="205914"/>
    <lineage>
        <taxon>Bacteria</taxon>
        <taxon>Pseudomonadati</taxon>
        <taxon>Pseudomonadota</taxon>
        <taxon>Gammaproteobacteria</taxon>
        <taxon>Pasteurellales</taxon>
        <taxon>Pasteurellaceae</taxon>
        <taxon>Histophilus</taxon>
    </lineage>
</organism>
<dbReference type="EC" id="4.1.1.37" evidence="1"/>
<dbReference type="EMBL" id="CP000436">
    <property type="protein sequence ID" value="ABI25808.1"/>
    <property type="molecule type" value="Genomic_DNA"/>
</dbReference>
<dbReference type="SMR" id="Q0I5E2"/>
<dbReference type="KEGG" id="hso:HS_1540"/>
<dbReference type="eggNOG" id="COG0407">
    <property type="taxonomic scope" value="Bacteria"/>
</dbReference>
<dbReference type="HOGENOM" id="CLU_040933_0_0_6"/>
<dbReference type="UniPathway" id="UPA00251">
    <property type="reaction ID" value="UER00321"/>
</dbReference>
<dbReference type="GO" id="GO:0005829">
    <property type="term" value="C:cytosol"/>
    <property type="evidence" value="ECO:0007669"/>
    <property type="project" value="TreeGrafter"/>
</dbReference>
<dbReference type="GO" id="GO:0004853">
    <property type="term" value="F:uroporphyrinogen decarboxylase activity"/>
    <property type="evidence" value="ECO:0007669"/>
    <property type="project" value="UniProtKB-UniRule"/>
</dbReference>
<dbReference type="GO" id="GO:0019353">
    <property type="term" value="P:protoporphyrinogen IX biosynthetic process from glutamate"/>
    <property type="evidence" value="ECO:0007669"/>
    <property type="project" value="TreeGrafter"/>
</dbReference>
<dbReference type="CDD" id="cd00717">
    <property type="entry name" value="URO-D"/>
    <property type="match status" value="1"/>
</dbReference>
<dbReference type="FunFam" id="3.20.20.210:FF:000001">
    <property type="entry name" value="Uroporphyrinogen decarboxylase"/>
    <property type="match status" value="1"/>
</dbReference>
<dbReference type="Gene3D" id="3.20.20.210">
    <property type="match status" value="1"/>
</dbReference>
<dbReference type="HAMAP" id="MF_00218">
    <property type="entry name" value="URO_D"/>
    <property type="match status" value="1"/>
</dbReference>
<dbReference type="InterPro" id="IPR038071">
    <property type="entry name" value="UROD/MetE-like_sf"/>
</dbReference>
<dbReference type="InterPro" id="IPR006361">
    <property type="entry name" value="Uroporphyrinogen_deCO2ase_HemE"/>
</dbReference>
<dbReference type="InterPro" id="IPR000257">
    <property type="entry name" value="Uroporphyrinogen_deCOase"/>
</dbReference>
<dbReference type="NCBIfam" id="TIGR01464">
    <property type="entry name" value="hemE"/>
    <property type="match status" value="1"/>
</dbReference>
<dbReference type="PANTHER" id="PTHR21091">
    <property type="entry name" value="METHYLTETRAHYDROFOLATE:HOMOCYSTEINE METHYLTRANSFERASE RELATED"/>
    <property type="match status" value="1"/>
</dbReference>
<dbReference type="PANTHER" id="PTHR21091:SF169">
    <property type="entry name" value="UROPORPHYRINOGEN DECARBOXYLASE"/>
    <property type="match status" value="1"/>
</dbReference>
<dbReference type="Pfam" id="PF01208">
    <property type="entry name" value="URO-D"/>
    <property type="match status" value="1"/>
</dbReference>
<dbReference type="SUPFAM" id="SSF51726">
    <property type="entry name" value="UROD/MetE-like"/>
    <property type="match status" value="1"/>
</dbReference>
<dbReference type="PROSITE" id="PS00906">
    <property type="entry name" value="UROD_1"/>
    <property type="match status" value="1"/>
</dbReference>
<dbReference type="PROSITE" id="PS00907">
    <property type="entry name" value="UROD_2"/>
    <property type="match status" value="1"/>
</dbReference>
<keyword id="KW-0963">Cytoplasm</keyword>
<keyword id="KW-0210">Decarboxylase</keyword>
<keyword id="KW-0456">Lyase</keyword>
<keyword id="KW-0627">Porphyrin biosynthesis</keyword>
<feature type="chain" id="PRO_1000023910" description="Uroporphyrinogen decarboxylase">
    <location>
        <begin position="1"/>
        <end position="354"/>
    </location>
</feature>
<feature type="binding site" evidence="1">
    <location>
        <begin position="27"/>
        <end position="31"/>
    </location>
    <ligand>
        <name>substrate</name>
    </ligand>
</feature>
<feature type="binding site" evidence="1">
    <location>
        <position position="77"/>
    </location>
    <ligand>
        <name>substrate</name>
    </ligand>
</feature>
<feature type="binding site" evidence="1">
    <location>
        <position position="154"/>
    </location>
    <ligand>
        <name>substrate</name>
    </ligand>
</feature>
<feature type="binding site" evidence="1">
    <location>
        <position position="209"/>
    </location>
    <ligand>
        <name>substrate</name>
    </ligand>
</feature>
<feature type="binding site" evidence="1">
    <location>
        <position position="327"/>
    </location>
    <ligand>
        <name>substrate</name>
    </ligand>
</feature>
<feature type="site" description="Transition state stabilizer" evidence="1">
    <location>
        <position position="77"/>
    </location>
</feature>